<organism>
    <name type="scientific">Arabidopsis thaliana</name>
    <name type="common">Mouse-ear cress</name>
    <dbReference type="NCBI Taxonomy" id="3702"/>
    <lineage>
        <taxon>Eukaryota</taxon>
        <taxon>Viridiplantae</taxon>
        <taxon>Streptophyta</taxon>
        <taxon>Embryophyta</taxon>
        <taxon>Tracheophyta</taxon>
        <taxon>Spermatophyta</taxon>
        <taxon>Magnoliopsida</taxon>
        <taxon>eudicotyledons</taxon>
        <taxon>Gunneridae</taxon>
        <taxon>Pentapetalae</taxon>
        <taxon>rosids</taxon>
        <taxon>malvids</taxon>
        <taxon>Brassicales</taxon>
        <taxon>Brassicaceae</taxon>
        <taxon>Camelineae</taxon>
        <taxon>Arabidopsis</taxon>
    </lineage>
</organism>
<accession>Q9LZH8</accession>
<comment type="function">
    <text evidence="1 4">Voltage-dependent high-conductance channel with a slight cation-selectivity; selective for amino acids but excludes triosephosphates or uncharged sugars (By similarity). Non-essential amino acid-selective channel protein and translocation pore for NADPH:protochlorophyllide oxidoreductase A (PORA) and possibly PORB.</text>
</comment>
<comment type="subunit">
    <text evidence="1">Homodimer and oligomers in membrane.</text>
</comment>
<comment type="subcellular location">
    <subcellularLocation>
        <location evidence="3">Plastid</location>
        <location evidence="3">Chloroplast outer membrane</location>
        <topology evidence="3">Multi-pass membrane protein</topology>
    </subcellularLocation>
</comment>
<comment type="similarity">
    <text evidence="5">Belongs to the Tim17/Tim22/Tim23 family. Plastid outer envelope porin OEP16 (TC 1.B.30) subfamily.</text>
</comment>
<feature type="chain" id="PRO_0000415699" description="Outer envelope pore protein 16-4, chloroplastic">
    <location>
        <begin position="1"/>
        <end position="136"/>
    </location>
</feature>
<feature type="transmembrane region" description="Helical" evidence="2">
    <location>
        <begin position="18"/>
        <end position="34"/>
    </location>
</feature>
<feature type="transmembrane region" description="Helical" evidence="2">
    <location>
        <begin position="56"/>
        <end position="72"/>
    </location>
</feature>
<feature type="transmembrane region" description="Helical" evidence="2">
    <location>
        <begin position="86"/>
        <end position="102"/>
    </location>
</feature>
<feature type="transmembrane region" description="Helical" evidence="2">
    <location>
        <begin position="110"/>
        <end position="126"/>
    </location>
</feature>
<feature type="region of interest" description="Contains 4 beta strands">
    <location>
        <begin position="1"/>
        <end position="59"/>
    </location>
</feature>
<keyword id="KW-0150">Chloroplast</keyword>
<keyword id="KW-0406">Ion transport</keyword>
<keyword id="KW-0472">Membrane</keyword>
<keyword id="KW-0934">Plastid</keyword>
<keyword id="KW-1002">Plastid outer membrane</keyword>
<keyword id="KW-0626">Porin</keyword>
<keyword id="KW-1185">Reference proteome</keyword>
<keyword id="KW-0812">Transmembrane</keyword>
<keyword id="KW-1134">Transmembrane beta strand</keyword>
<keyword id="KW-1133">Transmembrane helix</keyword>
<keyword id="KW-0813">Transport</keyword>
<proteinExistence type="evidence at transcript level"/>
<protein>
    <recommendedName>
        <fullName>Outer envelope pore protein 16-4, chloroplastic</fullName>
    </recommendedName>
    <alternativeName>
        <fullName>Chloroplastic outer envelope pore protein of 16 kDa 4</fullName>
        <shortName>AtOEP16-4</shortName>
        <shortName>OEP16-4</shortName>
    </alternativeName>
</protein>
<sequence length="136" mass="14071">MEEELLSAVPCSSLTVESVLRVATAGGLYGLCAGPRDARKIGLSGVSQASFVAKSIGRFGFQCGLVSGVFTMTHCGLQRYRGKNDWVNALVGGAVAGAAVAISTRNWTQVVGMAGLVSAFSVLANCTRTENPNNTN</sequence>
<reference key="1">
    <citation type="journal article" date="2000" name="Nature">
        <title>Sequence and analysis of chromosome 3 of the plant Arabidopsis thaliana.</title>
        <authorList>
            <person name="Salanoubat M."/>
            <person name="Lemcke K."/>
            <person name="Rieger M."/>
            <person name="Ansorge W."/>
            <person name="Unseld M."/>
            <person name="Fartmann B."/>
            <person name="Valle G."/>
            <person name="Bloecker H."/>
            <person name="Perez-Alonso M."/>
            <person name="Obermaier B."/>
            <person name="Delseny M."/>
            <person name="Boutry M."/>
            <person name="Grivell L.A."/>
            <person name="Mache R."/>
            <person name="Puigdomenech P."/>
            <person name="De Simone V."/>
            <person name="Choisne N."/>
            <person name="Artiguenave F."/>
            <person name="Robert C."/>
            <person name="Brottier P."/>
            <person name="Wincker P."/>
            <person name="Cattolico L."/>
            <person name="Weissenbach J."/>
            <person name="Saurin W."/>
            <person name="Quetier F."/>
            <person name="Schaefer M."/>
            <person name="Mueller-Auer S."/>
            <person name="Gabel C."/>
            <person name="Fuchs M."/>
            <person name="Benes V."/>
            <person name="Wurmbach E."/>
            <person name="Drzonek H."/>
            <person name="Erfle H."/>
            <person name="Jordan N."/>
            <person name="Bangert S."/>
            <person name="Wiedelmann R."/>
            <person name="Kranz H."/>
            <person name="Voss H."/>
            <person name="Holland R."/>
            <person name="Brandt P."/>
            <person name="Nyakatura G."/>
            <person name="Vezzi A."/>
            <person name="D'Angelo M."/>
            <person name="Pallavicini A."/>
            <person name="Toppo S."/>
            <person name="Simionati B."/>
            <person name="Conrad A."/>
            <person name="Hornischer K."/>
            <person name="Kauer G."/>
            <person name="Loehnert T.-H."/>
            <person name="Nordsiek G."/>
            <person name="Reichelt J."/>
            <person name="Scharfe M."/>
            <person name="Schoen O."/>
            <person name="Bargues M."/>
            <person name="Terol J."/>
            <person name="Climent J."/>
            <person name="Navarro P."/>
            <person name="Collado C."/>
            <person name="Perez-Perez A."/>
            <person name="Ottenwaelder B."/>
            <person name="Duchemin D."/>
            <person name="Cooke R."/>
            <person name="Laudie M."/>
            <person name="Berger-Llauro C."/>
            <person name="Purnelle B."/>
            <person name="Masuy D."/>
            <person name="de Haan M."/>
            <person name="Maarse A.C."/>
            <person name="Alcaraz J.-P."/>
            <person name="Cottet A."/>
            <person name="Casacuberta E."/>
            <person name="Monfort A."/>
            <person name="Argiriou A."/>
            <person name="Flores M."/>
            <person name="Liguori R."/>
            <person name="Vitale D."/>
            <person name="Mannhaupt G."/>
            <person name="Haase D."/>
            <person name="Schoof H."/>
            <person name="Rudd S."/>
            <person name="Zaccaria P."/>
            <person name="Mewes H.-W."/>
            <person name="Mayer K.F.X."/>
            <person name="Kaul S."/>
            <person name="Town C.D."/>
            <person name="Koo H.L."/>
            <person name="Tallon L.J."/>
            <person name="Jenkins J."/>
            <person name="Rooney T."/>
            <person name="Rizzo M."/>
            <person name="Walts A."/>
            <person name="Utterback T."/>
            <person name="Fujii C.Y."/>
            <person name="Shea T.P."/>
            <person name="Creasy T.H."/>
            <person name="Haas B."/>
            <person name="Maiti R."/>
            <person name="Wu D."/>
            <person name="Peterson J."/>
            <person name="Van Aken S."/>
            <person name="Pai G."/>
            <person name="Militscher J."/>
            <person name="Sellers P."/>
            <person name="Gill J.E."/>
            <person name="Feldblyum T.V."/>
            <person name="Preuss D."/>
            <person name="Lin X."/>
            <person name="Nierman W.C."/>
            <person name="Salzberg S.L."/>
            <person name="White O."/>
            <person name="Venter J.C."/>
            <person name="Fraser C.M."/>
            <person name="Kaneko T."/>
            <person name="Nakamura Y."/>
            <person name="Sato S."/>
            <person name="Kato T."/>
            <person name="Asamizu E."/>
            <person name="Sasamoto S."/>
            <person name="Kimura T."/>
            <person name="Idesawa K."/>
            <person name="Kawashima K."/>
            <person name="Kishida Y."/>
            <person name="Kiyokawa C."/>
            <person name="Kohara M."/>
            <person name="Matsumoto M."/>
            <person name="Matsuno A."/>
            <person name="Muraki A."/>
            <person name="Nakayama S."/>
            <person name="Nakazaki N."/>
            <person name="Shinpo S."/>
            <person name="Takeuchi C."/>
            <person name="Wada T."/>
            <person name="Watanabe A."/>
            <person name="Yamada M."/>
            <person name="Yasuda M."/>
            <person name="Tabata S."/>
        </authorList>
    </citation>
    <scope>NUCLEOTIDE SEQUENCE [LARGE SCALE GENOMIC DNA]</scope>
    <source>
        <strain>cv. Columbia</strain>
    </source>
</reference>
<reference key="2">
    <citation type="journal article" date="2017" name="Plant J.">
        <title>Araport11: a complete reannotation of the Arabidopsis thaliana reference genome.</title>
        <authorList>
            <person name="Cheng C.Y."/>
            <person name="Krishnakumar V."/>
            <person name="Chan A.P."/>
            <person name="Thibaud-Nissen F."/>
            <person name="Schobel S."/>
            <person name="Town C.D."/>
        </authorList>
    </citation>
    <scope>GENOME REANNOTATION</scope>
    <source>
        <strain>cv. Columbia</strain>
    </source>
</reference>
<reference key="3">
    <citation type="journal article" date="2002" name="Science">
        <title>Functional annotation of a full-length Arabidopsis cDNA collection.</title>
        <authorList>
            <person name="Seki M."/>
            <person name="Narusaka M."/>
            <person name="Kamiya A."/>
            <person name="Ishida J."/>
            <person name="Satou M."/>
            <person name="Sakurai T."/>
            <person name="Nakajima M."/>
            <person name="Enju A."/>
            <person name="Akiyama K."/>
            <person name="Oono Y."/>
            <person name="Muramatsu M."/>
            <person name="Hayashizaki Y."/>
            <person name="Kawai J."/>
            <person name="Carninci P."/>
            <person name="Itoh M."/>
            <person name="Ishii Y."/>
            <person name="Arakawa T."/>
            <person name="Shibata K."/>
            <person name="Shinagawa A."/>
            <person name="Shinozaki K."/>
        </authorList>
    </citation>
    <scope>NUCLEOTIDE SEQUENCE [LARGE SCALE MRNA]</scope>
    <source>
        <strain>cv. Columbia</strain>
    </source>
</reference>
<reference key="4">
    <citation type="journal article" date="2003" name="Science">
        <title>Empirical analysis of transcriptional activity in the Arabidopsis genome.</title>
        <authorList>
            <person name="Yamada K."/>
            <person name="Lim J."/>
            <person name="Dale J.M."/>
            <person name="Chen H."/>
            <person name="Shinn P."/>
            <person name="Palm C.J."/>
            <person name="Southwick A.M."/>
            <person name="Wu H.C."/>
            <person name="Kim C.J."/>
            <person name="Nguyen M."/>
            <person name="Pham P.K."/>
            <person name="Cheuk R.F."/>
            <person name="Karlin-Newmann G."/>
            <person name="Liu S.X."/>
            <person name="Lam B."/>
            <person name="Sakano H."/>
            <person name="Wu T."/>
            <person name="Yu G."/>
            <person name="Miranda M."/>
            <person name="Quach H.L."/>
            <person name="Tripp M."/>
            <person name="Chang C.H."/>
            <person name="Lee J.M."/>
            <person name="Toriumi M.J."/>
            <person name="Chan M.M."/>
            <person name="Tang C.C."/>
            <person name="Onodera C.S."/>
            <person name="Deng J.M."/>
            <person name="Akiyama K."/>
            <person name="Ansari Y."/>
            <person name="Arakawa T."/>
            <person name="Banh J."/>
            <person name="Banno F."/>
            <person name="Bowser L."/>
            <person name="Brooks S.Y."/>
            <person name="Carninci P."/>
            <person name="Chao Q."/>
            <person name="Choy N."/>
            <person name="Enju A."/>
            <person name="Goldsmith A.D."/>
            <person name="Gurjal M."/>
            <person name="Hansen N.F."/>
            <person name="Hayashizaki Y."/>
            <person name="Johnson-Hopson C."/>
            <person name="Hsuan V.W."/>
            <person name="Iida K."/>
            <person name="Karnes M."/>
            <person name="Khan S."/>
            <person name="Koesema E."/>
            <person name="Ishida J."/>
            <person name="Jiang P.X."/>
            <person name="Jones T."/>
            <person name="Kawai J."/>
            <person name="Kamiya A."/>
            <person name="Meyers C."/>
            <person name="Nakajima M."/>
            <person name="Narusaka M."/>
            <person name="Seki M."/>
            <person name="Sakurai T."/>
            <person name="Satou M."/>
            <person name="Tamse R."/>
            <person name="Vaysberg M."/>
            <person name="Wallender E.K."/>
            <person name="Wong C."/>
            <person name="Yamamura Y."/>
            <person name="Yuan S."/>
            <person name="Shinozaki K."/>
            <person name="Davis R.W."/>
            <person name="Theologis A."/>
            <person name="Ecker J.R."/>
        </authorList>
    </citation>
    <scope>NUCLEOTIDE SEQUENCE [LARGE SCALE MRNA]</scope>
    <source>
        <strain>cv. Columbia</strain>
    </source>
</reference>
<reference key="5">
    <citation type="journal article" date="2003" name="Protein Sci.">
        <title>Prediction of the plant beta-barrel proteome: a case study of the chloroplast outer envelope.</title>
        <authorList>
            <person name="Schleiff E."/>
            <person name="Eichacker L.A."/>
            <person name="Eckart K."/>
            <person name="Becker T."/>
            <person name="Mirus O."/>
            <person name="Stahl T."/>
            <person name="Soll J."/>
        </authorList>
    </citation>
    <scope>GENE FAMILY</scope>
</reference>
<reference key="6">
    <citation type="journal article" date="2007" name="Plant Physiol.">
        <title>Characterization of the preprotein and amino acid transporter gene family in Arabidopsis.</title>
        <authorList>
            <person name="Murcha M.W."/>
            <person name="Elhafez D."/>
            <person name="Lister R."/>
            <person name="Tonti-Filippini J."/>
            <person name="Baumgartner M."/>
            <person name="Philippar K."/>
            <person name="Carrie C."/>
            <person name="Mokranjac D."/>
            <person name="Soll J."/>
            <person name="Whelan J."/>
        </authorList>
    </citation>
    <scope>SUBCELLULAR LOCATION</scope>
    <scope>REVIEW</scope>
</reference>
<reference key="7">
    <citation type="journal article" date="2007" name="Proc. Natl. Acad. Sci. U.S.A.">
        <title>Chloroplast biogenesis: the use of mutants to study the etioplast-chloroplast transition.</title>
        <authorList>
            <person name="Philippar K."/>
            <person name="Geis T."/>
            <person name="Ilkavets I."/>
            <person name="Oster U."/>
            <person name="Schwenkert S."/>
            <person name="Meurer J."/>
            <person name="Soll J."/>
        </authorList>
    </citation>
    <scope>FUNCTION</scope>
    <scope>GENE FAMILY</scope>
</reference>
<dbReference type="EMBL" id="AL162651">
    <property type="protein sequence ID" value="CAB83138.1"/>
    <property type="molecule type" value="Genomic_DNA"/>
</dbReference>
<dbReference type="EMBL" id="CP002686">
    <property type="protein sequence ID" value="AEE80405.1"/>
    <property type="molecule type" value="Genomic_DNA"/>
</dbReference>
<dbReference type="EMBL" id="AK117583">
    <property type="protein sequence ID" value="BAC42241.1"/>
    <property type="molecule type" value="mRNA"/>
</dbReference>
<dbReference type="EMBL" id="BT005150">
    <property type="protein sequence ID" value="AAO50683.1"/>
    <property type="molecule type" value="mRNA"/>
</dbReference>
<dbReference type="PIR" id="T48077">
    <property type="entry name" value="T48077"/>
</dbReference>
<dbReference type="SMR" id="Q9LZH8"/>
<dbReference type="FunCoup" id="Q9LZH8">
    <property type="interactions" value="109"/>
</dbReference>
<dbReference type="STRING" id="3702.Q9LZH8"/>
<dbReference type="TCDB" id="1.B.30.2.1">
    <property type="family name" value="the plastid outer envelope porin of 16 kda (oep16) family"/>
</dbReference>
<dbReference type="PaxDb" id="3702-AT3G62880.2"/>
<dbReference type="ProteomicsDB" id="249365"/>
<dbReference type="EnsemblPlants" id="AT3G62880.1">
    <property type="protein sequence ID" value="AT3G62880.1"/>
    <property type="gene ID" value="AT3G62880"/>
</dbReference>
<dbReference type="Gramene" id="AT3G62880.1">
    <property type="protein sequence ID" value="AT3G62880.1"/>
    <property type="gene ID" value="AT3G62880"/>
</dbReference>
<dbReference type="KEGG" id="ath:AT3G62880"/>
<dbReference type="Araport" id="AT3G62880"/>
<dbReference type="TAIR" id="AT3G62880">
    <property type="gene designation" value="ATOEP16-4"/>
</dbReference>
<dbReference type="eggNOG" id="ENOG502S1KR">
    <property type="taxonomic scope" value="Eukaryota"/>
</dbReference>
<dbReference type="HOGENOM" id="CLU_126263_0_0_1"/>
<dbReference type="InParanoid" id="Q9LZH8"/>
<dbReference type="OMA" id="DWVNGLV"/>
<dbReference type="OrthoDB" id="1865977at2759"/>
<dbReference type="PhylomeDB" id="Q9LZH8"/>
<dbReference type="PRO" id="PR:Q9LZH8"/>
<dbReference type="Proteomes" id="UP000006548">
    <property type="component" value="Chromosome 3"/>
</dbReference>
<dbReference type="ExpressionAtlas" id="Q9LZH8">
    <property type="expression patterns" value="baseline and differential"/>
</dbReference>
<dbReference type="GO" id="GO:0009707">
    <property type="term" value="C:chloroplast outer membrane"/>
    <property type="evidence" value="ECO:0007669"/>
    <property type="project" value="UniProtKB-SubCell"/>
</dbReference>
<dbReference type="GO" id="GO:0009527">
    <property type="term" value="C:plastid outer membrane"/>
    <property type="evidence" value="ECO:0000250"/>
    <property type="project" value="TAIR"/>
</dbReference>
<dbReference type="GO" id="GO:0046930">
    <property type="term" value="C:pore complex"/>
    <property type="evidence" value="ECO:0007669"/>
    <property type="project" value="UniProtKB-KW"/>
</dbReference>
<dbReference type="GO" id="GO:0042721">
    <property type="term" value="C:TIM22 mitochondrial import inner membrane insertion complex"/>
    <property type="evidence" value="ECO:0007669"/>
    <property type="project" value="InterPro"/>
</dbReference>
<dbReference type="GO" id="GO:0015288">
    <property type="term" value="F:porin activity"/>
    <property type="evidence" value="ECO:0007669"/>
    <property type="project" value="UniProtKB-KW"/>
</dbReference>
<dbReference type="GO" id="GO:0042803">
    <property type="term" value="F:protein homodimerization activity"/>
    <property type="evidence" value="ECO:0000250"/>
    <property type="project" value="UniProtKB"/>
</dbReference>
<dbReference type="GO" id="GO:0006811">
    <property type="term" value="P:monoatomic ion transport"/>
    <property type="evidence" value="ECO:0007669"/>
    <property type="project" value="UniProtKB-KW"/>
</dbReference>
<dbReference type="GO" id="GO:0045039">
    <property type="term" value="P:protein insertion into mitochondrial inner membrane"/>
    <property type="evidence" value="ECO:0007669"/>
    <property type="project" value="InterPro"/>
</dbReference>
<dbReference type="InterPro" id="IPR039175">
    <property type="entry name" value="TIM22"/>
</dbReference>
<dbReference type="PANTHER" id="PTHR14110">
    <property type="entry name" value="MITOCHONDRIAL IMPORT INNER MEMBRANE TRANSLOCASE SUBUNIT TIM22"/>
    <property type="match status" value="1"/>
</dbReference>
<dbReference type="PANTHER" id="PTHR14110:SF5">
    <property type="entry name" value="OUTER ENVELOPE PORE PROTEIN 16-4, CHLOROPLASTIC"/>
    <property type="match status" value="1"/>
</dbReference>
<dbReference type="Pfam" id="PF02466">
    <property type="entry name" value="Tim17"/>
    <property type="match status" value="1"/>
</dbReference>
<evidence type="ECO:0000250" key="1"/>
<evidence type="ECO:0000255" key="2"/>
<evidence type="ECO:0000269" key="3">
    <source>
    </source>
</evidence>
<evidence type="ECO:0000269" key="4">
    <source>
    </source>
</evidence>
<evidence type="ECO:0000305" key="5"/>
<name>OP164_ARATH</name>
<gene>
    <name type="primary">OEP164</name>
    <name type="ordered locus">At3g62880</name>
    <name type="ORF">F26K9.310</name>
</gene>